<accession>A6TAZ1</accession>
<feature type="chain" id="PRO_1000064586" description="UPF0266 membrane protein KPN78578_23010">
    <location>
        <begin position="1"/>
        <end position="152"/>
    </location>
</feature>
<feature type="transmembrane region" description="Helical" evidence="1">
    <location>
        <begin position="6"/>
        <end position="26"/>
    </location>
</feature>
<feature type="transmembrane region" description="Helical" evidence="1">
    <location>
        <begin position="45"/>
        <end position="65"/>
    </location>
</feature>
<feature type="transmembrane region" description="Helical" evidence="1">
    <location>
        <begin position="67"/>
        <end position="87"/>
    </location>
</feature>
<reference key="1">
    <citation type="submission" date="2006-09" db="EMBL/GenBank/DDBJ databases">
        <authorList>
            <consortium name="The Klebsiella pneumonia Genome Sequencing Project"/>
            <person name="McClelland M."/>
            <person name="Sanderson E.K."/>
            <person name="Spieth J."/>
            <person name="Clifton W.S."/>
            <person name="Latreille P."/>
            <person name="Sabo A."/>
            <person name="Pepin K."/>
            <person name="Bhonagiri V."/>
            <person name="Porwollik S."/>
            <person name="Ali J."/>
            <person name="Wilson R.K."/>
        </authorList>
    </citation>
    <scope>NUCLEOTIDE SEQUENCE [LARGE SCALE GENOMIC DNA]</scope>
    <source>
        <strain>ATCC 700721 / MGH 78578</strain>
    </source>
</reference>
<name>Y2301_KLEP7</name>
<dbReference type="EMBL" id="CP000647">
    <property type="protein sequence ID" value="ABR77762.1"/>
    <property type="molecule type" value="Genomic_DNA"/>
</dbReference>
<dbReference type="RefSeq" id="WP_004215046.1">
    <property type="nucleotide sequence ID" value="NC_009648.1"/>
</dbReference>
<dbReference type="STRING" id="272620.KPN_02336"/>
<dbReference type="PaxDb" id="272620-KPN_02336"/>
<dbReference type="EnsemblBacteria" id="ABR77762">
    <property type="protein sequence ID" value="ABR77762"/>
    <property type="gene ID" value="KPN_02336"/>
</dbReference>
<dbReference type="KEGG" id="kpn:KPN_02336"/>
<dbReference type="HOGENOM" id="CLU_133645_0_0_6"/>
<dbReference type="Proteomes" id="UP000000265">
    <property type="component" value="Chromosome"/>
</dbReference>
<dbReference type="GO" id="GO:0005886">
    <property type="term" value="C:plasma membrane"/>
    <property type="evidence" value="ECO:0007669"/>
    <property type="project" value="UniProtKB-SubCell"/>
</dbReference>
<dbReference type="HAMAP" id="MF_01071">
    <property type="entry name" value="UPF0266"/>
    <property type="match status" value="1"/>
</dbReference>
<dbReference type="InterPro" id="IPR009328">
    <property type="entry name" value="DUF986"/>
</dbReference>
<dbReference type="NCBIfam" id="NF002791">
    <property type="entry name" value="PRK02913.1"/>
    <property type="match status" value="1"/>
</dbReference>
<dbReference type="Pfam" id="PF06173">
    <property type="entry name" value="DUF986"/>
    <property type="match status" value="1"/>
</dbReference>
<dbReference type="PIRSF" id="PIRSF020687">
    <property type="entry name" value="UCP020687"/>
    <property type="match status" value="1"/>
</dbReference>
<gene>
    <name type="ordered locus">KPN78578_23010</name>
    <name type="ORF">KPN_02336</name>
</gene>
<comment type="subcellular location">
    <subcellularLocation>
        <location evidence="1">Cell inner membrane</location>
        <topology evidence="1">Multi-pass membrane protein</topology>
    </subcellularLocation>
</comment>
<comment type="similarity">
    <text evidence="1">Belongs to the UPF0266 family.</text>
</comment>
<sequence length="152" mass="17819">MTFTDLVIILFILALLAYAIYDQFIMPRRNGPVLLAIPLLRRSRVDGMIFVGLTAILIYNNITQHGTAITTWLLSVLALMGLYLFWIRTPKIIFKPRGFFFANVWIEYQRIKEMNLSEDGVLVMQLEQRRLLIRVRNIDDLEKIYKLLITTQ</sequence>
<evidence type="ECO:0000255" key="1">
    <source>
        <dbReference type="HAMAP-Rule" id="MF_01071"/>
    </source>
</evidence>
<keyword id="KW-0997">Cell inner membrane</keyword>
<keyword id="KW-1003">Cell membrane</keyword>
<keyword id="KW-0472">Membrane</keyword>
<keyword id="KW-0812">Transmembrane</keyword>
<keyword id="KW-1133">Transmembrane helix</keyword>
<organism>
    <name type="scientific">Klebsiella pneumoniae subsp. pneumoniae (strain ATCC 700721 / MGH 78578)</name>
    <dbReference type="NCBI Taxonomy" id="272620"/>
    <lineage>
        <taxon>Bacteria</taxon>
        <taxon>Pseudomonadati</taxon>
        <taxon>Pseudomonadota</taxon>
        <taxon>Gammaproteobacteria</taxon>
        <taxon>Enterobacterales</taxon>
        <taxon>Enterobacteriaceae</taxon>
        <taxon>Klebsiella/Raoultella group</taxon>
        <taxon>Klebsiella</taxon>
        <taxon>Klebsiella pneumoniae complex</taxon>
    </lineage>
</organism>
<proteinExistence type="inferred from homology"/>
<protein>
    <recommendedName>
        <fullName evidence="1">UPF0266 membrane protein KPN78578_23010</fullName>
    </recommendedName>
</protein>